<reference key="1">
    <citation type="journal article" date="2008" name="J. Bacteriol.">
        <title>The pangenome structure of Escherichia coli: comparative genomic analysis of E. coli commensal and pathogenic isolates.</title>
        <authorList>
            <person name="Rasko D.A."/>
            <person name="Rosovitz M.J."/>
            <person name="Myers G.S.A."/>
            <person name="Mongodin E.F."/>
            <person name="Fricke W.F."/>
            <person name="Gajer P."/>
            <person name="Crabtree J."/>
            <person name="Sebaihia M."/>
            <person name="Thomson N.R."/>
            <person name="Chaudhuri R."/>
            <person name="Henderson I.R."/>
            <person name="Sperandio V."/>
            <person name="Ravel J."/>
        </authorList>
    </citation>
    <scope>NUCLEOTIDE SEQUENCE [LARGE SCALE GENOMIC DNA]</scope>
    <source>
        <strain>HS</strain>
    </source>
</reference>
<feature type="chain" id="PRO_0000337896" description="Anti-adapter protein IraD">
    <location>
        <begin position="1"/>
        <end position="130"/>
    </location>
</feature>
<evidence type="ECO:0000255" key="1">
    <source>
        <dbReference type="HAMAP-Rule" id="MF_02010"/>
    </source>
</evidence>
<evidence type="ECO:0000305" key="2"/>
<keyword id="KW-0963">Cytoplasm</keyword>
<keyword id="KW-0346">Stress response</keyword>
<gene>
    <name evidence="1" type="primary">iraD</name>
    <name type="ordered locus">EcHS_A4554</name>
</gene>
<comment type="function">
    <text evidence="1">Inhibits RpoS proteolysis by regulating RssB activity, thereby increasing the stability of the sigma stress factor RpoS during oxidative stress. Its effect on RpoS stability is due to its interaction with RssB, which probably blocks the interaction of RssB with RpoS, and the consequent delivery of the RssB-RpoS complex to the ClpXP protein degradation pathway.</text>
</comment>
<comment type="subunit">
    <text evidence="1">Interacts with RssB.</text>
</comment>
<comment type="subcellular location">
    <subcellularLocation>
        <location evidence="1">Cytoplasm</location>
    </subcellularLocation>
</comment>
<comment type="similarity">
    <text evidence="1">Belongs to the GpW/Gp25 family. IraD subfamily.</text>
</comment>
<comment type="sequence caution" evidence="2">
    <conflict type="erroneous initiation">
        <sequence resource="EMBL-CDS" id="ABV08707"/>
    </conflict>
</comment>
<sequence>MMRQSLQAVLPEISGNKTSLLRKSVCSDILTLFNSPHSALPSLLVSGMPEWQVHNQSDKHLQSWYCRQLRSALLFHEPRIAALQVNFKEAYCHTLAISLEIMLYHDGEPLTFDLVWDNGGWCSAMLENVS</sequence>
<proteinExistence type="inferred from homology"/>
<protein>
    <recommendedName>
        <fullName evidence="1">Anti-adapter protein IraD</fullName>
    </recommendedName>
</protein>
<organism>
    <name type="scientific">Escherichia coli O9:H4 (strain HS)</name>
    <dbReference type="NCBI Taxonomy" id="331112"/>
    <lineage>
        <taxon>Bacteria</taxon>
        <taxon>Pseudomonadati</taxon>
        <taxon>Pseudomonadota</taxon>
        <taxon>Gammaproteobacteria</taxon>
        <taxon>Enterobacterales</taxon>
        <taxon>Enterobacteriaceae</taxon>
        <taxon>Escherichia</taxon>
    </lineage>
</organism>
<accession>A8A853</accession>
<dbReference type="EMBL" id="CP000802">
    <property type="protein sequence ID" value="ABV08707.1"/>
    <property type="status" value="ALT_INIT"/>
    <property type="molecule type" value="Genomic_DNA"/>
</dbReference>
<dbReference type="RefSeq" id="WP_000986204.1">
    <property type="nucleotide sequence ID" value="NC_009800.1"/>
</dbReference>
<dbReference type="SMR" id="A8A853"/>
<dbReference type="KEGG" id="ecx:EcHS_A4554"/>
<dbReference type="HOGENOM" id="CLU_1977621_0_0_6"/>
<dbReference type="GO" id="GO:0005737">
    <property type="term" value="C:cytoplasm"/>
    <property type="evidence" value="ECO:0007669"/>
    <property type="project" value="UniProtKB-SubCell"/>
</dbReference>
<dbReference type="GO" id="GO:0043856">
    <property type="term" value="F:anti-sigma factor antagonist activity"/>
    <property type="evidence" value="ECO:0007669"/>
    <property type="project" value="InterPro"/>
</dbReference>
<dbReference type="GO" id="GO:0034599">
    <property type="term" value="P:cellular response to oxidative stress"/>
    <property type="evidence" value="ECO:0007669"/>
    <property type="project" value="UniProtKB-UniRule"/>
</dbReference>
<dbReference type="GO" id="GO:0006974">
    <property type="term" value="P:DNA damage response"/>
    <property type="evidence" value="ECO:0007669"/>
    <property type="project" value="InterPro"/>
</dbReference>
<dbReference type="HAMAP" id="MF_02010">
    <property type="entry name" value="IraD"/>
    <property type="match status" value="1"/>
</dbReference>
<dbReference type="InterPro" id="IPR023776">
    <property type="entry name" value="Anti-adapt_IraD"/>
</dbReference>
<dbReference type="InterPro" id="IPR007048">
    <property type="entry name" value="IraD/Gp25-like"/>
</dbReference>
<dbReference type="NCBIfam" id="NF010726">
    <property type="entry name" value="PRK14128.1-1"/>
    <property type="match status" value="1"/>
</dbReference>
<dbReference type="NCBIfam" id="NF010728">
    <property type="entry name" value="PRK14128.1-3"/>
    <property type="match status" value="1"/>
</dbReference>
<dbReference type="Pfam" id="PF04965">
    <property type="entry name" value="GPW_gp25"/>
    <property type="match status" value="1"/>
</dbReference>
<dbReference type="SUPFAM" id="SSF160719">
    <property type="entry name" value="gpW/gp25-like"/>
    <property type="match status" value="1"/>
</dbReference>
<name>IRAD_ECOHS</name>